<evidence type="ECO:0000255" key="1">
    <source>
        <dbReference type="HAMAP-Rule" id="MF_00380"/>
    </source>
</evidence>
<evidence type="ECO:0000256" key="2">
    <source>
        <dbReference type="SAM" id="MobiDB-lite"/>
    </source>
</evidence>
<protein>
    <recommendedName>
        <fullName evidence="1">Integration host factor subunit alpha</fullName>
        <shortName evidence="1">IHF-alpha</shortName>
    </recommendedName>
</protein>
<dbReference type="EMBL" id="CP000681">
    <property type="protein sequence ID" value="ABP75553.1"/>
    <property type="molecule type" value="Genomic_DNA"/>
</dbReference>
<dbReference type="SMR" id="A4Y6H0"/>
<dbReference type="STRING" id="319224.Sputcn32_1830"/>
<dbReference type="KEGG" id="spc:Sputcn32_1830"/>
<dbReference type="eggNOG" id="COG0776">
    <property type="taxonomic scope" value="Bacteria"/>
</dbReference>
<dbReference type="HOGENOM" id="CLU_105066_1_3_6"/>
<dbReference type="GO" id="GO:0005829">
    <property type="term" value="C:cytosol"/>
    <property type="evidence" value="ECO:0007669"/>
    <property type="project" value="TreeGrafter"/>
</dbReference>
<dbReference type="GO" id="GO:0003677">
    <property type="term" value="F:DNA binding"/>
    <property type="evidence" value="ECO:0007669"/>
    <property type="project" value="UniProtKB-UniRule"/>
</dbReference>
<dbReference type="GO" id="GO:0030527">
    <property type="term" value="F:structural constituent of chromatin"/>
    <property type="evidence" value="ECO:0007669"/>
    <property type="project" value="InterPro"/>
</dbReference>
<dbReference type="GO" id="GO:0006310">
    <property type="term" value="P:DNA recombination"/>
    <property type="evidence" value="ECO:0007669"/>
    <property type="project" value="UniProtKB-UniRule"/>
</dbReference>
<dbReference type="GO" id="GO:0009893">
    <property type="term" value="P:positive regulation of metabolic process"/>
    <property type="evidence" value="ECO:0007669"/>
    <property type="project" value="UniProtKB-ARBA"/>
</dbReference>
<dbReference type="GO" id="GO:0006355">
    <property type="term" value="P:regulation of DNA-templated transcription"/>
    <property type="evidence" value="ECO:0007669"/>
    <property type="project" value="UniProtKB-UniRule"/>
</dbReference>
<dbReference type="GO" id="GO:0006417">
    <property type="term" value="P:regulation of translation"/>
    <property type="evidence" value="ECO:0007669"/>
    <property type="project" value="UniProtKB-UniRule"/>
</dbReference>
<dbReference type="CDD" id="cd13835">
    <property type="entry name" value="IHF_A"/>
    <property type="match status" value="1"/>
</dbReference>
<dbReference type="FunFam" id="4.10.520.10:FF:000002">
    <property type="entry name" value="Integration host factor subunit alpha"/>
    <property type="match status" value="1"/>
</dbReference>
<dbReference type="Gene3D" id="4.10.520.10">
    <property type="entry name" value="IHF-like DNA-binding proteins"/>
    <property type="match status" value="1"/>
</dbReference>
<dbReference type="HAMAP" id="MF_00380">
    <property type="entry name" value="IHF_alpha"/>
    <property type="match status" value="1"/>
</dbReference>
<dbReference type="InterPro" id="IPR000119">
    <property type="entry name" value="Hist_DNA-bd"/>
</dbReference>
<dbReference type="InterPro" id="IPR020816">
    <property type="entry name" value="Histone-like_DNA-bd_CS"/>
</dbReference>
<dbReference type="InterPro" id="IPR010992">
    <property type="entry name" value="IHF-like_DNA-bd_dom_sf"/>
</dbReference>
<dbReference type="InterPro" id="IPR005684">
    <property type="entry name" value="IHF_alpha"/>
</dbReference>
<dbReference type="NCBIfam" id="TIGR00987">
    <property type="entry name" value="himA"/>
    <property type="match status" value="1"/>
</dbReference>
<dbReference type="NCBIfam" id="NF001401">
    <property type="entry name" value="PRK00285.1"/>
    <property type="match status" value="1"/>
</dbReference>
<dbReference type="PANTHER" id="PTHR33175">
    <property type="entry name" value="DNA-BINDING PROTEIN HU"/>
    <property type="match status" value="1"/>
</dbReference>
<dbReference type="PANTHER" id="PTHR33175:SF2">
    <property type="entry name" value="INTEGRATION HOST FACTOR SUBUNIT ALPHA"/>
    <property type="match status" value="1"/>
</dbReference>
<dbReference type="Pfam" id="PF00216">
    <property type="entry name" value="Bac_DNA_binding"/>
    <property type="match status" value="1"/>
</dbReference>
<dbReference type="PRINTS" id="PR01727">
    <property type="entry name" value="DNABINDINGHU"/>
</dbReference>
<dbReference type="SMART" id="SM00411">
    <property type="entry name" value="BHL"/>
    <property type="match status" value="1"/>
</dbReference>
<dbReference type="SUPFAM" id="SSF47729">
    <property type="entry name" value="IHF-like DNA-binding proteins"/>
    <property type="match status" value="1"/>
</dbReference>
<dbReference type="PROSITE" id="PS00045">
    <property type="entry name" value="HISTONE_LIKE"/>
    <property type="match status" value="1"/>
</dbReference>
<gene>
    <name evidence="1" type="primary">ihfA</name>
    <name evidence="1" type="synonym">himA</name>
    <name type="ordered locus">Sputcn32_1830</name>
</gene>
<reference key="1">
    <citation type="submission" date="2007-04" db="EMBL/GenBank/DDBJ databases">
        <title>Complete sequence of Shewanella putrefaciens CN-32.</title>
        <authorList>
            <consortium name="US DOE Joint Genome Institute"/>
            <person name="Copeland A."/>
            <person name="Lucas S."/>
            <person name="Lapidus A."/>
            <person name="Barry K."/>
            <person name="Detter J.C."/>
            <person name="Glavina del Rio T."/>
            <person name="Hammon N."/>
            <person name="Israni S."/>
            <person name="Dalin E."/>
            <person name="Tice H."/>
            <person name="Pitluck S."/>
            <person name="Chain P."/>
            <person name="Malfatti S."/>
            <person name="Shin M."/>
            <person name="Vergez L."/>
            <person name="Schmutz J."/>
            <person name="Larimer F."/>
            <person name="Land M."/>
            <person name="Hauser L."/>
            <person name="Kyrpides N."/>
            <person name="Mikhailova N."/>
            <person name="Romine M.F."/>
            <person name="Fredrickson J."/>
            <person name="Tiedje J."/>
            <person name="Richardson P."/>
        </authorList>
    </citation>
    <scope>NUCLEOTIDE SEQUENCE [LARGE SCALE GENOMIC DNA]</scope>
    <source>
        <strain>CN-32 / ATCC BAA-453</strain>
    </source>
</reference>
<accession>A4Y6H0</accession>
<feature type="chain" id="PRO_1000060571" description="Integration host factor subunit alpha">
    <location>
        <begin position="1"/>
        <end position="98"/>
    </location>
</feature>
<feature type="region of interest" description="Disordered" evidence="2">
    <location>
        <begin position="49"/>
        <end position="70"/>
    </location>
</feature>
<comment type="function">
    <text evidence="1">This protein is one of the two subunits of integration host factor, a specific DNA-binding protein that functions in genetic recombination as well as in transcriptional and translational control.</text>
</comment>
<comment type="subunit">
    <text evidence="1">Heterodimer of an alpha and a beta chain.</text>
</comment>
<comment type="similarity">
    <text evidence="1">Belongs to the bacterial histone-like protein family.</text>
</comment>
<organism>
    <name type="scientific">Shewanella putrefaciens (strain CN-32 / ATCC BAA-453)</name>
    <dbReference type="NCBI Taxonomy" id="319224"/>
    <lineage>
        <taxon>Bacteria</taxon>
        <taxon>Pseudomonadati</taxon>
        <taxon>Pseudomonadota</taxon>
        <taxon>Gammaproteobacteria</taxon>
        <taxon>Alteromonadales</taxon>
        <taxon>Shewanellaceae</taxon>
        <taxon>Shewanella</taxon>
    </lineage>
</organism>
<keyword id="KW-0233">DNA recombination</keyword>
<keyword id="KW-0238">DNA-binding</keyword>
<keyword id="KW-0804">Transcription</keyword>
<keyword id="KW-0805">Transcription regulation</keyword>
<keyword id="KW-0810">Translation regulation</keyword>
<proteinExistence type="inferred from homology"/>
<name>IHFA_SHEPC</name>
<sequence>MALTKAEMAEHLFETLGMNKRVAKEMVESFFEEIRGALESGEQVKLSGFGNFDLRDKNQRPGRNPKTGEDIPISARRVVTFRPGQKLKTRVEAANTGK</sequence>